<dbReference type="EC" id="2.2.1.7" evidence="1"/>
<dbReference type="EMBL" id="AM408590">
    <property type="protein sequence ID" value="CAL72683.1"/>
    <property type="molecule type" value="Genomic_DNA"/>
</dbReference>
<dbReference type="RefSeq" id="WP_003413891.1">
    <property type="nucleotide sequence ID" value="NC_008769.1"/>
</dbReference>
<dbReference type="SMR" id="A1KM20"/>
<dbReference type="KEGG" id="mbb:BCG_2695c"/>
<dbReference type="HOGENOM" id="CLU_009227_1_4_11"/>
<dbReference type="UniPathway" id="UPA00064">
    <property type="reaction ID" value="UER00091"/>
</dbReference>
<dbReference type="Proteomes" id="UP000001472">
    <property type="component" value="Chromosome"/>
</dbReference>
<dbReference type="GO" id="GO:0005829">
    <property type="term" value="C:cytosol"/>
    <property type="evidence" value="ECO:0007669"/>
    <property type="project" value="TreeGrafter"/>
</dbReference>
<dbReference type="GO" id="GO:0008661">
    <property type="term" value="F:1-deoxy-D-xylulose-5-phosphate synthase activity"/>
    <property type="evidence" value="ECO:0007669"/>
    <property type="project" value="UniProtKB-UniRule"/>
</dbReference>
<dbReference type="GO" id="GO:0000287">
    <property type="term" value="F:magnesium ion binding"/>
    <property type="evidence" value="ECO:0007669"/>
    <property type="project" value="UniProtKB-UniRule"/>
</dbReference>
<dbReference type="GO" id="GO:0030976">
    <property type="term" value="F:thiamine pyrophosphate binding"/>
    <property type="evidence" value="ECO:0007669"/>
    <property type="project" value="UniProtKB-UniRule"/>
</dbReference>
<dbReference type="GO" id="GO:0052865">
    <property type="term" value="P:1-deoxy-D-xylulose 5-phosphate biosynthetic process"/>
    <property type="evidence" value="ECO:0007669"/>
    <property type="project" value="UniProtKB-UniPathway"/>
</dbReference>
<dbReference type="GO" id="GO:0019288">
    <property type="term" value="P:isopentenyl diphosphate biosynthetic process, methylerythritol 4-phosphate pathway"/>
    <property type="evidence" value="ECO:0007669"/>
    <property type="project" value="TreeGrafter"/>
</dbReference>
<dbReference type="GO" id="GO:0016114">
    <property type="term" value="P:terpenoid biosynthetic process"/>
    <property type="evidence" value="ECO:0007669"/>
    <property type="project" value="UniProtKB-UniRule"/>
</dbReference>
<dbReference type="GO" id="GO:0009228">
    <property type="term" value="P:thiamine biosynthetic process"/>
    <property type="evidence" value="ECO:0007669"/>
    <property type="project" value="UniProtKB-UniRule"/>
</dbReference>
<dbReference type="CDD" id="cd02007">
    <property type="entry name" value="TPP_DXS"/>
    <property type="match status" value="1"/>
</dbReference>
<dbReference type="CDD" id="cd07033">
    <property type="entry name" value="TPP_PYR_DXS_TK_like"/>
    <property type="match status" value="1"/>
</dbReference>
<dbReference type="FunFam" id="3.40.50.920:FF:000002">
    <property type="entry name" value="1-deoxy-D-xylulose-5-phosphate synthase"/>
    <property type="match status" value="1"/>
</dbReference>
<dbReference type="FunFam" id="3.40.50.970:FF:000005">
    <property type="entry name" value="1-deoxy-D-xylulose-5-phosphate synthase"/>
    <property type="match status" value="1"/>
</dbReference>
<dbReference type="Gene3D" id="3.40.50.920">
    <property type="match status" value="1"/>
</dbReference>
<dbReference type="Gene3D" id="3.40.50.970">
    <property type="match status" value="2"/>
</dbReference>
<dbReference type="HAMAP" id="MF_00315">
    <property type="entry name" value="DXP_synth"/>
    <property type="match status" value="1"/>
</dbReference>
<dbReference type="InterPro" id="IPR005477">
    <property type="entry name" value="Dxylulose-5-P_synthase"/>
</dbReference>
<dbReference type="InterPro" id="IPR029061">
    <property type="entry name" value="THDP-binding"/>
</dbReference>
<dbReference type="InterPro" id="IPR009014">
    <property type="entry name" value="Transketo_C/PFOR_II"/>
</dbReference>
<dbReference type="InterPro" id="IPR005475">
    <property type="entry name" value="Transketolase-like_Pyr-bd"/>
</dbReference>
<dbReference type="InterPro" id="IPR020826">
    <property type="entry name" value="Transketolase_BS"/>
</dbReference>
<dbReference type="InterPro" id="IPR033248">
    <property type="entry name" value="Transketolase_C"/>
</dbReference>
<dbReference type="InterPro" id="IPR049557">
    <property type="entry name" value="Transketolase_CS"/>
</dbReference>
<dbReference type="NCBIfam" id="TIGR00204">
    <property type="entry name" value="dxs"/>
    <property type="match status" value="1"/>
</dbReference>
<dbReference type="NCBIfam" id="NF003933">
    <property type="entry name" value="PRK05444.2-2"/>
    <property type="match status" value="1"/>
</dbReference>
<dbReference type="PANTHER" id="PTHR43322">
    <property type="entry name" value="1-D-DEOXYXYLULOSE 5-PHOSPHATE SYNTHASE-RELATED"/>
    <property type="match status" value="1"/>
</dbReference>
<dbReference type="PANTHER" id="PTHR43322:SF5">
    <property type="entry name" value="1-DEOXY-D-XYLULOSE-5-PHOSPHATE SYNTHASE, CHLOROPLASTIC"/>
    <property type="match status" value="1"/>
</dbReference>
<dbReference type="Pfam" id="PF13292">
    <property type="entry name" value="DXP_synthase_N"/>
    <property type="match status" value="1"/>
</dbReference>
<dbReference type="Pfam" id="PF02779">
    <property type="entry name" value="Transket_pyr"/>
    <property type="match status" value="1"/>
</dbReference>
<dbReference type="Pfam" id="PF02780">
    <property type="entry name" value="Transketolase_C"/>
    <property type="match status" value="1"/>
</dbReference>
<dbReference type="SMART" id="SM00861">
    <property type="entry name" value="Transket_pyr"/>
    <property type="match status" value="1"/>
</dbReference>
<dbReference type="SUPFAM" id="SSF52518">
    <property type="entry name" value="Thiamin diphosphate-binding fold (THDP-binding)"/>
    <property type="match status" value="2"/>
</dbReference>
<dbReference type="SUPFAM" id="SSF52922">
    <property type="entry name" value="TK C-terminal domain-like"/>
    <property type="match status" value="1"/>
</dbReference>
<dbReference type="PROSITE" id="PS00801">
    <property type="entry name" value="TRANSKETOLASE_1"/>
    <property type="match status" value="1"/>
</dbReference>
<dbReference type="PROSITE" id="PS00802">
    <property type="entry name" value="TRANSKETOLASE_2"/>
    <property type="match status" value="1"/>
</dbReference>
<sequence length="638" mass="67885">MLQQIRGPADLQHLSQAQLRELAAEIREFLIHKVAATGGHLGPNLGVVELTLALHRVFDSPHDPIIFDTGHQAYVHKMLTGRSQDFATLRKKGGLSGYPSRAESEHDWVESSHASAALSYADGLAKAFELTGHRNRHVVAVVGDGALTGGMCWEALNNIAASRRPVIIVVNDNGRSYAPTIGGVADHLATLRLQPAYEQALETGRDLVRAVPLVGGLWFRFLHSVKAGIKDSLSPQLLFTDLGLKYVGPVDGHDERAVEVALRSARRFGAPVIVHVVTRKGMGYPPAEADQAEQMHSTVPIDPATGQATKVAGPGWTATFSDALIGYAQKRRDIVAITAAMPGPTGLTAFGQRFPDRLFDVGIAEQHAMTSAAGLAMGGLHPVVAIYSTFLNRAFDQIMMDVALHKLPVTMVLDRAGITGSDGASHNGMWDLSMLGIVPGIRVAAPRDATRLREELGEALDVDDGPTALRFPKGDVGEDISALERRGGVDVLAAPADGLNHDVLLVAIGAFAPMALAVAKRLHNQGIGVTVIDPRWVLPVSDGVRELAVQHKLLVTLEDNGVNGGAGSAVSAALRRAEIDVPCRDVGLPQEFYEHASRSEVLADLGLTDQDVARRITGWVAALGTGVCASDAIPEHLD</sequence>
<name>DXS_MYCBP</name>
<protein>
    <recommendedName>
        <fullName evidence="1">1-deoxy-D-xylulose-5-phosphate synthase</fullName>
        <ecNumber evidence="1">2.2.1.7</ecNumber>
    </recommendedName>
    <alternativeName>
        <fullName evidence="1">1-deoxyxylulose-5-phosphate synthase</fullName>
        <shortName evidence="1">DXP synthase</shortName>
        <shortName evidence="1">DXPS</shortName>
    </alternativeName>
</protein>
<reference key="1">
    <citation type="journal article" date="2007" name="Proc. Natl. Acad. Sci. U.S.A.">
        <title>Genome plasticity of BCG and impact on vaccine efficacy.</title>
        <authorList>
            <person name="Brosch R."/>
            <person name="Gordon S.V."/>
            <person name="Garnier T."/>
            <person name="Eiglmeier K."/>
            <person name="Frigui W."/>
            <person name="Valenti P."/>
            <person name="Dos Santos S."/>
            <person name="Duthoy S."/>
            <person name="Lacroix C."/>
            <person name="Garcia-Pelayo C."/>
            <person name="Inwald J.K."/>
            <person name="Golby P."/>
            <person name="Garcia J.N."/>
            <person name="Hewinson R.G."/>
            <person name="Behr M.A."/>
            <person name="Quail M.A."/>
            <person name="Churcher C."/>
            <person name="Barrell B.G."/>
            <person name="Parkhill J."/>
            <person name="Cole S.T."/>
        </authorList>
    </citation>
    <scope>NUCLEOTIDE SEQUENCE [LARGE SCALE GENOMIC DNA]</scope>
    <source>
        <strain>BCG / Pasteur 1173P2</strain>
    </source>
</reference>
<feature type="chain" id="PRO_1000019040" description="1-deoxy-D-xylulose-5-phosphate synthase">
    <location>
        <begin position="1"/>
        <end position="638"/>
    </location>
</feature>
<feature type="binding site" evidence="1">
    <location>
        <position position="71"/>
    </location>
    <ligand>
        <name>thiamine diphosphate</name>
        <dbReference type="ChEBI" id="CHEBI:58937"/>
    </ligand>
</feature>
<feature type="binding site" evidence="1">
    <location>
        <begin position="112"/>
        <end position="114"/>
    </location>
    <ligand>
        <name>thiamine diphosphate</name>
        <dbReference type="ChEBI" id="CHEBI:58937"/>
    </ligand>
</feature>
<feature type="binding site" evidence="1">
    <location>
        <position position="144"/>
    </location>
    <ligand>
        <name>Mg(2+)</name>
        <dbReference type="ChEBI" id="CHEBI:18420"/>
    </ligand>
</feature>
<feature type="binding site" evidence="1">
    <location>
        <begin position="145"/>
        <end position="146"/>
    </location>
    <ligand>
        <name>thiamine diphosphate</name>
        <dbReference type="ChEBI" id="CHEBI:58937"/>
    </ligand>
</feature>
<feature type="binding site" evidence="1">
    <location>
        <position position="173"/>
    </location>
    <ligand>
        <name>Mg(2+)</name>
        <dbReference type="ChEBI" id="CHEBI:18420"/>
    </ligand>
</feature>
<feature type="binding site" evidence="1">
    <location>
        <position position="173"/>
    </location>
    <ligand>
        <name>thiamine diphosphate</name>
        <dbReference type="ChEBI" id="CHEBI:58937"/>
    </ligand>
</feature>
<feature type="binding site" evidence="1">
    <location>
        <position position="284"/>
    </location>
    <ligand>
        <name>thiamine diphosphate</name>
        <dbReference type="ChEBI" id="CHEBI:58937"/>
    </ligand>
</feature>
<feature type="binding site" evidence="1">
    <location>
        <position position="365"/>
    </location>
    <ligand>
        <name>thiamine diphosphate</name>
        <dbReference type="ChEBI" id="CHEBI:58937"/>
    </ligand>
</feature>
<gene>
    <name evidence="1" type="primary">dxs</name>
    <name type="ordered locus">BCG_2695c</name>
</gene>
<evidence type="ECO:0000255" key="1">
    <source>
        <dbReference type="HAMAP-Rule" id="MF_00315"/>
    </source>
</evidence>
<comment type="function">
    <text evidence="1">Catalyzes the acyloin condensation reaction between C atoms 2 and 3 of pyruvate and glyceraldehyde 3-phosphate to yield 1-deoxy-D-xylulose-5-phosphate (DXP).</text>
</comment>
<comment type="catalytic activity">
    <reaction evidence="1">
        <text>D-glyceraldehyde 3-phosphate + pyruvate + H(+) = 1-deoxy-D-xylulose 5-phosphate + CO2</text>
        <dbReference type="Rhea" id="RHEA:12605"/>
        <dbReference type="ChEBI" id="CHEBI:15361"/>
        <dbReference type="ChEBI" id="CHEBI:15378"/>
        <dbReference type="ChEBI" id="CHEBI:16526"/>
        <dbReference type="ChEBI" id="CHEBI:57792"/>
        <dbReference type="ChEBI" id="CHEBI:59776"/>
        <dbReference type="EC" id="2.2.1.7"/>
    </reaction>
</comment>
<comment type="cofactor">
    <cofactor evidence="1">
        <name>Mg(2+)</name>
        <dbReference type="ChEBI" id="CHEBI:18420"/>
    </cofactor>
    <text evidence="1">Binds 1 Mg(2+) ion per subunit.</text>
</comment>
<comment type="cofactor">
    <cofactor evidence="1">
        <name>thiamine diphosphate</name>
        <dbReference type="ChEBI" id="CHEBI:58937"/>
    </cofactor>
    <text evidence="1">Binds 1 thiamine pyrophosphate per subunit.</text>
</comment>
<comment type="pathway">
    <text evidence="1">Metabolic intermediate biosynthesis; 1-deoxy-D-xylulose 5-phosphate biosynthesis; 1-deoxy-D-xylulose 5-phosphate from D-glyceraldehyde 3-phosphate and pyruvate: step 1/1.</text>
</comment>
<comment type="subunit">
    <text evidence="1">Homodimer.</text>
</comment>
<comment type="similarity">
    <text evidence="1">Belongs to the transketolase family. DXPS subfamily.</text>
</comment>
<organism>
    <name type="scientific">Mycobacterium bovis (strain BCG / Pasteur 1173P2)</name>
    <dbReference type="NCBI Taxonomy" id="410289"/>
    <lineage>
        <taxon>Bacteria</taxon>
        <taxon>Bacillati</taxon>
        <taxon>Actinomycetota</taxon>
        <taxon>Actinomycetes</taxon>
        <taxon>Mycobacteriales</taxon>
        <taxon>Mycobacteriaceae</taxon>
        <taxon>Mycobacterium</taxon>
        <taxon>Mycobacterium tuberculosis complex</taxon>
    </lineage>
</organism>
<keyword id="KW-0414">Isoprene biosynthesis</keyword>
<keyword id="KW-0460">Magnesium</keyword>
<keyword id="KW-0479">Metal-binding</keyword>
<keyword id="KW-0784">Thiamine biosynthesis</keyword>
<keyword id="KW-0786">Thiamine pyrophosphate</keyword>
<keyword id="KW-0808">Transferase</keyword>
<proteinExistence type="inferred from homology"/>
<accession>A1KM20</accession>